<gene>
    <name type="primary">Pawr</name>
    <name type="synonym">Par4</name>
</gene>
<name>PAWR_RAT</name>
<sequence length="332" mass="35866">MATGGYRSSGSTTDFLEEWKAKREKMRAKQNPVGPGSSGGDPAAKSPAGPLAQTTAAGTSELNHGPAGAAAPAAPGPGALNCAHGSSALPRGAPGSRRPEDECPIAAGAAGAPASRGDEEEPDSAPEKGRSSGPSARKGKGQIEKRKLREKRRSTGVVNIPAAECLDEYEDDEAGQKERKREDAITQQNTIQNEAASLPDPGTSYLPQDPSRTVPGRYKSTISAPEEEILNRYPRTDRSGFSRHNRDTSAPANFASSSTLEKRIEDLEKEVLRERQENLRLTRLMQDKEEMIGKLKEEIDLLNRDLDDMEDENEQLKQENKTLLKVVGQLTR</sequence>
<keyword id="KW-0002">3D-structure</keyword>
<keyword id="KW-0053">Apoptosis</keyword>
<keyword id="KW-0175">Coiled coil</keyword>
<keyword id="KW-0963">Cytoplasm</keyword>
<keyword id="KW-0539">Nucleus</keyword>
<keyword id="KW-0597">Phosphoprotein</keyword>
<keyword id="KW-1185">Reference proteome</keyword>
<keyword id="KW-0804">Transcription</keyword>
<keyword id="KW-0805">Transcription regulation</keyword>
<evidence type="ECO:0000250" key="1"/>
<evidence type="ECO:0000250" key="2">
    <source>
        <dbReference type="UniProtKB" id="Q925B0"/>
    </source>
</evidence>
<evidence type="ECO:0000250" key="3">
    <source>
        <dbReference type="UniProtKB" id="Q96IZ0"/>
    </source>
</evidence>
<evidence type="ECO:0000255" key="4"/>
<evidence type="ECO:0000256" key="5">
    <source>
        <dbReference type="SAM" id="MobiDB-lite"/>
    </source>
</evidence>
<evidence type="ECO:0000269" key="6">
    <source>
    </source>
</evidence>
<evidence type="ECO:0000269" key="7">
    <source>
    </source>
</evidence>
<evidence type="ECO:0000269" key="8">
    <source>
    </source>
</evidence>
<evidence type="ECO:0007829" key="9">
    <source>
        <dbReference type="PDB" id="5FIY"/>
    </source>
</evidence>
<comment type="function">
    <text evidence="1">Pro-apoptotic protein capable of selectively inducing apoptosis in cancer cells, sensitizing the cells to diverse apoptotic stimuli and causing regression of tumors in animal models. Induces apoptosis in certain cancer cells by activation of the Fas prodeath pathway and coparallel inhibition of NF-kappa-B transcriptional activity. Inhibits the transcriptional activation and augments the transcriptional repression mediated by WT1. Down-regulates the anti-apoptotic protein BCL2 via its interaction with WT1. Also seems to be a transcriptional repressor by itself. May be directly involved in regulating the amyloid precursor protein (APP) cleavage activity of BACE1 (By similarity).</text>
</comment>
<comment type="subunit">
    <text evidence="2 3 7">Homooligomer. Interacts (via the C-terminal region) with WT1. Interacts with THAP1. Interacts with AATF. Interacts with BACE1. Interacts with SPSB1 (via B30.2/SPRY domain); this interaction is direct and occurs in association with the Elongin BC complex. Interacts with SPSB2 (via B30.2/SPRY domain); this interaction occurs in association with the Elongin BC complex. Interacts with SPSB4 (via B30.2/SPRY domain); this interaction occurs in association with the Elongin BC complex. Component of a ternary complex composed of SQSTM1 and PRKCZ (By similarity). Interacts with actin (PubMed:15817164).</text>
</comment>
<comment type="interaction">
    <interactant intactId="EBI-1187240">
        <id>Q62627</id>
    </interactant>
    <interactant intactId="EBI-4404236">
        <id>O88764</id>
        <label>Dapk3</label>
    </interactant>
    <organismsDiffer>false</organismsDiffer>
    <experiments>5</experiments>
</comment>
<comment type="interaction">
    <interactant intactId="EBI-1187240">
        <id>Q62627</id>
    </interactant>
    <interactant intactId="EBI-1767101">
        <id>Q9JMG6</id>
        <label>Tfpt</label>
    </interactant>
    <organismsDiffer>false</organismsDiffer>
    <experiments>8</experiments>
</comment>
<comment type="interaction">
    <interactant intactId="EBI-1187240">
        <id>Q62627</id>
    </interactant>
    <interactant intactId="EBI-354921">
        <id>P11021</id>
        <label>HSPA5</label>
    </interactant>
    <organismsDiffer>true</organismsDiffer>
    <experiments>4</experiments>
</comment>
<comment type="subcellular location">
    <subcellularLocation>
        <location evidence="1">Cytoplasm</location>
    </subcellularLocation>
    <subcellularLocation>
        <location evidence="1">Nucleus</location>
    </subcellularLocation>
    <text evidence="1">Mainly cytoplasmic in absence of apoptosis signal and in normal cells. Nuclear in most cancer cell lines. Nuclear entry seems to be essential but not sufficient for apoptosis. Nuclear localization includes nucleoplasm and PML nuclear bodies (By similarity).</text>
</comment>
<comment type="induction">
    <text evidence="8">In ventral prostate following castration.</text>
</comment>
<comment type="domain">
    <text evidence="1">The leucine-zipper domain is not essential for apoptosis, but is required for sensitization of cells to exogenous apoptotic insults and for interaction with its partners.</text>
</comment>
<comment type="domain">
    <text evidence="1">The SAC domain is a death-inducing domain selective for apoptosis induction in cancer cells. This domain is essential for nuclear entry, Fas activation, inhibition of NF-kappa-B activity and induction of apoptosis in cancer cells (By similarity).</text>
</comment>
<comment type="domain">
    <text evidence="3">The B30.2/SPRY domain-binding motif mediates recognition by proteins containing a B30.2/SPRY domain.</text>
</comment>
<comment type="PTM">
    <text evidence="6">Preferentially phosphorylated at the Thr-155 by PKC in cancer cells.</text>
</comment>
<feature type="chain" id="PRO_0000058238" description="PRKC apoptosis WT1 regulator protein">
    <location>
        <begin position="1"/>
        <end position="332"/>
    </location>
</feature>
<feature type="region of interest" description="Disordered" evidence="5">
    <location>
        <begin position="1"/>
        <end position="253"/>
    </location>
</feature>
<feature type="region of interest" description="Selective for apoptosis induction in cancer cells (SAC)">
    <location>
        <begin position="137"/>
        <end position="195"/>
    </location>
</feature>
<feature type="region of interest" description="Leucine-zipper">
    <location>
        <begin position="292"/>
        <end position="332"/>
    </location>
</feature>
<feature type="coiled-coil region" evidence="4">
    <location>
        <begin position="176"/>
        <end position="198"/>
    </location>
</feature>
<feature type="short sequence motif" description="B30.2/SPRY domain-binding motif" evidence="3">
    <location>
        <begin position="61"/>
        <end position="65"/>
    </location>
</feature>
<feature type="short sequence motif" description="Nuclear localization signal">
    <location>
        <begin position="137"/>
        <end position="153"/>
    </location>
</feature>
<feature type="compositionally biased region" description="Polar residues" evidence="5">
    <location>
        <begin position="1"/>
        <end position="14"/>
    </location>
</feature>
<feature type="compositionally biased region" description="Polar residues" evidence="5">
    <location>
        <begin position="52"/>
        <end position="62"/>
    </location>
</feature>
<feature type="compositionally biased region" description="Low complexity" evidence="5">
    <location>
        <begin position="65"/>
        <end position="79"/>
    </location>
</feature>
<feature type="compositionally biased region" description="Basic and acidic residues" evidence="5">
    <location>
        <begin position="174"/>
        <end position="184"/>
    </location>
</feature>
<feature type="compositionally biased region" description="Polar residues" evidence="5">
    <location>
        <begin position="185"/>
        <end position="195"/>
    </location>
</feature>
<feature type="compositionally biased region" description="Basic and acidic residues" evidence="5">
    <location>
        <begin position="234"/>
        <end position="247"/>
    </location>
</feature>
<feature type="modified residue" description="Phosphothreonine; by PKA" evidence="6">
    <location>
        <position position="155"/>
    </location>
</feature>
<feature type="modified residue" description="Phosphoserine" evidence="3">
    <location>
        <position position="223"/>
    </location>
</feature>
<feature type="helix" evidence="9">
    <location>
        <begin position="257"/>
        <end position="330"/>
    </location>
</feature>
<organism>
    <name type="scientific">Rattus norvegicus</name>
    <name type="common">Rat</name>
    <dbReference type="NCBI Taxonomy" id="10116"/>
    <lineage>
        <taxon>Eukaryota</taxon>
        <taxon>Metazoa</taxon>
        <taxon>Chordata</taxon>
        <taxon>Craniata</taxon>
        <taxon>Vertebrata</taxon>
        <taxon>Euteleostomi</taxon>
        <taxon>Mammalia</taxon>
        <taxon>Eutheria</taxon>
        <taxon>Euarchontoglires</taxon>
        <taxon>Glires</taxon>
        <taxon>Rodentia</taxon>
        <taxon>Myomorpha</taxon>
        <taxon>Muroidea</taxon>
        <taxon>Muridae</taxon>
        <taxon>Murinae</taxon>
        <taxon>Rattus</taxon>
    </lineage>
</organism>
<protein>
    <recommendedName>
        <fullName>PRKC apoptosis WT1 regulator protein</fullName>
    </recommendedName>
    <alternativeName>
        <fullName>Prostate apoptosis response 4 protein</fullName>
        <shortName>Par-4</shortName>
    </alternativeName>
    <alternativeName>
        <fullName>Transcriptional repressor Par-4-like protein PAWR</fullName>
    </alternativeName>
</protein>
<accession>Q62627</accession>
<proteinExistence type="evidence at protein level"/>
<dbReference type="EMBL" id="U05989">
    <property type="protein sequence ID" value="AAA16492.1"/>
    <property type="molecule type" value="mRNA"/>
</dbReference>
<dbReference type="RefSeq" id="NP_277020.1">
    <property type="nucleotide sequence ID" value="NM_033485.2"/>
</dbReference>
<dbReference type="PDB" id="5FIY">
    <property type="method" value="X-ray"/>
    <property type="resolution" value="3.00 A"/>
    <property type="chains" value="A/B/C/D/E/F/G=240-332"/>
</dbReference>
<dbReference type="PDBsum" id="5FIY"/>
<dbReference type="SMR" id="Q62627"/>
<dbReference type="BioGRID" id="249098">
    <property type="interactions" value="4"/>
</dbReference>
<dbReference type="FunCoup" id="Q62627">
    <property type="interactions" value="768"/>
</dbReference>
<dbReference type="IntAct" id="Q62627">
    <property type="interactions" value="5"/>
</dbReference>
<dbReference type="STRING" id="10116.ENSRNOP00000008222"/>
<dbReference type="iPTMnet" id="Q62627"/>
<dbReference type="PhosphoSitePlus" id="Q62627"/>
<dbReference type="PaxDb" id="10116-ENSRNOP00000008222"/>
<dbReference type="DNASU" id="64513"/>
<dbReference type="GeneID" id="64513"/>
<dbReference type="KEGG" id="rno:64513"/>
<dbReference type="UCSC" id="RGD:69065">
    <property type="organism name" value="rat"/>
</dbReference>
<dbReference type="AGR" id="RGD:69065"/>
<dbReference type="CTD" id="5074"/>
<dbReference type="RGD" id="69065">
    <property type="gene designation" value="Pawr"/>
</dbReference>
<dbReference type="eggNOG" id="ENOG502QVUF">
    <property type="taxonomic scope" value="Eukaryota"/>
</dbReference>
<dbReference type="InParanoid" id="Q62627"/>
<dbReference type="PhylomeDB" id="Q62627"/>
<dbReference type="PRO" id="PR:Q62627"/>
<dbReference type="Proteomes" id="UP000002494">
    <property type="component" value="Unplaced"/>
</dbReference>
<dbReference type="GO" id="GO:0005884">
    <property type="term" value="C:actin filament"/>
    <property type="evidence" value="ECO:0000314"/>
    <property type="project" value="RGD"/>
</dbReference>
<dbReference type="GO" id="GO:0030424">
    <property type="term" value="C:axon"/>
    <property type="evidence" value="ECO:0000314"/>
    <property type="project" value="RGD"/>
</dbReference>
<dbReference type="GO" id="GO:0000785">
    <property type="term" value="C:chromatin"/>
    <property type="evidence" value="ECO:0000266"/>
    <property type="project" value="RGD"/>
</dbReference>
<dbReference type="GO" id="GO:0005737">
    <property type="term" value="C:cytoplasm"/>
    <property type="evidence" value="ECO:0000266"/>
    <property type="project" value="RGD"/>
</dbReference>
<dbReference type="GO" id="GO:0043025">
    <property type="term" value="C:neuronal cell body"/>
    <property type="evidence" value="ECO:0000314"/>
    <property type="project" value="RGD"/>
</dbReference>
<dbReference type="GO" id="GO:0005634">
    <property type="term" value="C:nucleus"/>
    <property type="evidence" value="ECO:0000266"/>
    <property type="project" value="RGD"/>
</dbReference>
<dbReference type="GO" id="GO:0003779">
    <property type="term" value="F:actin binding"/>
    <property type="evidence" value="ECO:0000314"/>
    <property type="project" value="UniProtKB"/>
</dbReference>
<dbReference type="GO" id="GO:0019899">
    <property type="term" value="F:enzyme binding"/>
    <property type="evidence" value="ECO:0000266"/>
    <property type="project" value="RGD"/>
</dbReference>
<dbReference type="GO" id="GO:0043522">
    <property type="term" value="F:leucine zipper domain binding"/>
    <property type="evidence" value="ECO:0000266"/>
    <property type="project" value="RGD"/>
</dbReference>
<dbReference type="GO" id="GO:0005080">
    <property type="term" value="F:protein kinase C binding"/>
    <property type="evidence" value="ECO:0000353"/>
    <property type="project" value="RGD"/>
</dbReference>
<dbReference type="GO" id="GO:0008157">
    <property type="term" value="F:protein phosphatase 1 binding"/>
    <property type="evidence" value="ECO:0000353"/>
    <property type="project" value="RGD"/>
</dbReference>
<dbReference type="GO" id="GO:0051017">
    <property type="term" value="P:actin filament bundle assembly"/>
    <property type="evidence" value="ECO:0000314"/>
    <property type="project" value="UniProtKB"/>
</dbReference>
<dbReference type="GO" id="GO:0006915">
    <property type="term" value="P:apoptotic process"/>
    <property type="evidence" value="ECO:0000314"/>
    <property type="project" value="UniProtKB"/>
</dbReference>
<dbReference type="GO" id="GO:0097190">
    <property type="term" value="P:apoptotic signaling pathway"/>
    <property type="evidence" value="ECO:0000266"/>
    <property type="project" value="RGD"/>
</dbReference>
<dbReference type="GO" id="GO:0098703">
    <property type="term" value="P:calcium ion import across plasma membrane"/>
    <property type="evidence" value="ECO:0000314"/>
    <property type="project" value="RGD"/>
</dbReference>
<dbReference type="GO" id="GO:0071392">
    <property type="term" value="P:cellular response to estradiol stimulus"/>
    <property type="evidence" value="ECO:0000270"/>
    <property type="project" value="RGD"/>
</dbReference>
<dbReference type="GO" id="GO:0071372">
    <property type="term" value="P:cellular response to follicle-stimulating hormone stimulus"/>
    <property type="evidence" value="ECO:0000270"/>
    <property type="project" value="RGD"/>
</dbReference>
<dbReference type="GO" id="GO:0071347">
    <property type="term" value="P:cellular response to interleukin-1"/>
    <property type="evidence" value="ECO:0000270"/>
    <property type="project" value="RGD"/>
</dbReference>
<dbReference type="GO" id="GO:0071306">
    <property type="term" value="P:cellular response to vitamin E"/>
    <property type="evidence" value="ECO:0000270"/>
    <property type="project" value="RGD"/>
</dbReference>
<dbReference type="GO" id="GO:0050966">
    <property type="term" value="P:detection of mechanical stimulus involved in sensory perception of pain"/>
    <property type="evidence" value="ECO:0000314"/>
    <property type="project" value="RGD"/>
</dbReference>
<dbReference type="GO" id="GO:0050965">
    <property type="term" value="P:detection of temperature stimulus involved in sensory perception of pain"/>
    <property type="evidence" value="ECO:0000314"/>
    <property type="project" value="RGD"/>
</dbReference>
<dbReference type="GO" id="GO:0030889">
    <property type="term" value="P:negative regulation of B cell proliferation"/>
    <property type="evidence" value="ECO:0000266"/>
    <property type="project" value="RGD"/>
</dbReference>
<dbReference type="GO" id="GO:0090281">
    <property type="term" value="P:negative regulation of calcium ion import"/>
    <property type="evidence" value="ECO:0000314"/>
    <property type="project" value="RGD"/>
</dbReference>
<dbReference type="GO" id="GO:0048147">
    <property type="term" value="P:negative regulation of fibroblast proliferation"/>
    <property type="evidence" value="ECO:0000266"/>
    <property type="project" value="RGD"/>
</dbReference>
<dbReference type="GO" id="GO:0010629">
    <property type="term" value="P:negative regulation of gene expression"/>
    <property type="evidence" value="ECO:0000266"/>
    <property type="project" value="RGD"/>
</dbReference>
<dbReference type="GO" id="GO:0042130">
    <property type="term" value="P:negative regulation of T cell proliferation"/>
    <property type="evidence" value="ECO:0000266"/>
    <property type="project" value="RGD"/>
</dbReference>
<dbReference type="GO" id="GO:0050860">
    <property type="term" value="P:negative regulation of T cell receptor signaling pathway"/>
    <property type="evidence" value="ECO:0000266"/>
    <property type="project" value="RGD"/>
</dbReference>
<dbReference type="GO" id="GO:0000122">
    <property type="term" value="P:negative regulation of transcription by RNA polymerase II"/>
    <property type="evidence" value="ECO:0000266"/>
    <property type="project" value="RGD"/>
</dbReference>
<dbReference type="GO" id="GO:0045760">
    <property type="term" value="P:positive regulation of action potential"/>
    <property type="evidence" value="ECO:0000314"/>
    <property type="project" value="RGD"/>
</dbReference>
<dbReference type="GO" id="GO:0042986">
    <property type="term" value="P:positive regulation of amyloid precursor protein biosynthetic process"/>
    <property type="evidence" value="ECO:0000266"/>
    <property type="project" value="RGD"/>
</dbReference>
<dbReference type="GO" id="GO:0043065">
    <property type="term" value="P:positive regulation of apoptotic process"/>
    <property type="evidence" value="ECO:0000315"/>
    <property type="project" value="RGD"/>
</dbReference>
<dbReference type="GO" id="GO:2000774">
    <property type="term" value="P:positive regulation of cellular senescence"/>
    <property type="evidence" value="ECO:0000266"/>
    <property type="project" value="RGD"/>
</dbReference>
<dbReference type="GO" id="GO:0010628">
    <property type="term" value="P:positive regulation of gene expression"/>
    <property type="evidence" value="ECO:0000266"/>
    <property type="project" value="RGD"/>
</dbReference>
<dbReference type="GO" id="GO:0060450">
    <property type="term" value="P:positive regulation of hindgut contraction"/>
    <property type="evidence" value="ECO:0000314"/>
    <property type="project" value="RGD"/>
</dbReference>
<dbReference type="GO" id="GO:1901300">
    <property type="term" value="P:positive regulation of hydrogen peroxide-mediated programmed cell death"/>
    <property type="evidence" value="ECO:0000266"/>
    <property type="project" value="RGD"/>
</dbReference>
<dbReference type="GO" id="GO:2001244">
    <property type="term" value="P:positive regulation of intrinsic apoptotic signaling pathway"/>
    <property type="evidence" value="ECO:0000315"/>
    <property type="project" value="RGD"/>
</dbReference>
<dbReference type="GO" id="GO:1903238">
    <property type="term" value="P:positive regulation of leukocyte tethering or rolling"/>
    <property type="evidence" value="ECO:0000314"/>
    <property type="project" value="RGD"/>
</dbReference>
<dbReference type="GO" id="GO:0043525">
    <property type="term" value="P:positive regulation of neuron apoptotic process"/>
    <property type="evidence" value="ECO:0000315"/>
    <property type="project" value="RGD"/>
</dbReference>
<dbReference type="GO" id="GO:1904457">
    <property type="term" value="P:positive regulation of neuronal action potential"/>
    <property type="evidence" value="ECO:0000315"/>
    <property type="project" value="RGD"/>
</dbReference>
<dbReference type="GO" id="GO:2000391">
    <property type="term" value="P:positive regulation of neutrophil extravasation"/>
    <property type="evidence" value="ECO:0000314"/>
    <property type="project" value="RGD"/>
</dbReference>
<dbReference type="GO" id="GO:1901082">
    <property type="term" value="P:positive regulation of relaxation of smooth muscle"/>
    <property type="evidence" value="ECO:0000314"/>
    <property type="project" value="RGD"/>
</dbReference>
<dbReference type="GO" id="GO:0032355">
    <property type="term" value="P:response to estradiol"/>
    <property type="evidence" value="ECO:0000270"/>
    <property type="project" value="RGD"/>
</dbReference>
<dbReference type="GO" id="GO:0010040">
    <property type="term" value="P:response to iron(II) ion"/>
    <property type="evidence" value="ECO:0000270"/>
    <property type="project" value="RGD"/>
</dbReference>
<dbReference type="GO" id="GO:0032496">
    <property type="term" value="P:response to lipopolysaccharide"/>
    <property type="evidence" value="ECO:0000270"/>
    <property type="project" value="RGD"/>
</dbReference>
<dbReference type="DisProt" id="DP00940"/>
<dbReference type="InterPro" id="IPR026117">
    <property type="entry name" value="Par-4"/>
</dbReference>
<dbReference type="PANTHER" id="PTHR15093:SF1">
    <property type="entry name" value="PRKC APOPTOSIS WT1 REGULATOR PROTEIN"/>
    <property type="match status" value="1"/>
</dbReference>
<dbReference type="PANTHER" id="PTHR15093">
    <property type="entry name" value="PROSTATE APOPTOSIS RESPONSE PROTEIN PAR-4"/>
    <property type="match status" value="1"/>
</dbReference>
<reference key="1">
    <citation type="journal article" date="1994" name="Cell Growth Differ.">
        <title>Commonality of the gene programs induced by effectors of apoptosis in androgen-dependent and -independent prostate cells.</title>
        <authorList>
            <person name="Sells S.F."/>
            <person name="Wood D.P. Jr."/>
            <person name="Joshi-Barve S.S."/>
            <person name="Muthukumar S."/>
            <person name="Jacob R.J."/>
            <person name="Crist S.A."/>
            <person name="Humphreys S."/>
            <person name="Rangnekar V.M."/>
        </authorList>
    </citation>
    <scope>NUCLEOTIDE SEQUENCE [MRNA]</scope>
    <scope>INDUCTION</scope>
    <source>
        <tissue>Prostate</tissue>
    </source>
</reference>
<reference key="2">
    <citation type="journal article" date="2003" name="Mol. Cell. Biol.">
        <title>Identification of a unique core domain of par-4 sufficient for selective apoptosis induction in cancer cells.</title>
        <authorList>
            <person name="El-Guendy N."/>
            <person name="Zhao Y."/>
            <person name="Gurumurthy S."/>
            <person name="Burikhanov R."/>
            <person name="Rangnekar V.M."/>
        </authorList>
    </citation>
    <scope>DOMAIN SAC</scope>
    <scope>MUTAGENESIS</scope>
    <scope>SUBCELLULAR LOCATION</scope>
</reference>
<reference key="3">
    <citation type="journal article" date="2005" name="Mol. Cell. Biol.">
        <title>Phosphorylation of Par-4 by protein kinase A is critical for apoptosis.</title>
        <authorList>
            <person name="Gurumurthy S."/>
            <person name="Goswami A."/>
            <person name="Vasudevan K.M."/>
            <person name="Rangnekar V.M."/>
        </authorList>
    </citation>
    <scope>PHOSPHORYLATION AT THR-155 BY PKA</scope>
</reference>
<reference key="4">
    <citation type="journal article" date="2005" name="Exp. Cell Res.">
        <title>Binding of Par-4 to the actin cytoskeleton is essential for Par-4/Dlk-mediated apoptosis.</title>
        <authorList>
            <person name="Vetterkind S."/>
            <person name="Illenberger S."/>
            <person name="Kubicek J."/>
            <person name="Boosen M."/>
            <person name="Appel S."/>
            <person name="Naim H.Y."/>
            <person name="Scheidtmann K.H."/>
            <person name="Preuss U."/>
        </authorList>
    </citation>
    <scope>INTERACTION WITH ACTIN</scope>
</reference>